<feature type="chain" id="PRO_0000413783" description="Cell division protein ZapC">
    <location>
        <begin position="1"/>
        <end position="178"/>
    </location>
</feature>
<proteinExistence type="inferred from homology"/>
<dbReference type="EMBL" id="CP000388">
    <property type="protein sequence ID" value="ABG40522.1"/>
    <property type="molecule type" value="Genomic_DNA"/>
</dbReference>
<dbReference type="RefSeq" id="WP_011574815.1">
    <property type="nucleotide sequence ID" value="NC_008228.1"/>
</dbReference>
<dbReference type="SMR" id="Q15UB6"/>
<dbReference type="STRING" id="342610.Patl_2004"/>
<dbReference type="KEGG" id="pat:Patl_2004"/>
<dbReference type="eggNOG" id="ENOG502Z8AH">
    <property type="taxonomic scope" value="Bacteria"/>
</dbReference>
<dbReference type="HOGENOM" id="CLU_128248_0_0_6"/>
<dbReference type="OrthoDB" id="5765005at2"/>
<dbReference type="Proteomes" id="UP000001981">
    <property type="component" value="Chromosome"/>
</dbReference>
<dbReference type="GO" id="GO:0005737">
    <property type="term" value="C:cytoplasm"/>
    <property type="evidence" value="ECO:0007669"/>
    <property type="project" value="UniProtKB-SubCell"/>
</dbReference>
<dbReference type="GO" id="GO:0000917">
    <property type="term" value="P:division septum assembly"/>
    <property type="evidence" value="ECO:0007669"/>
    <property type="project" value="UniProtKB-KW"/>
</dbReference>
<dbReference type="GO" id="GO:0043093">
    <property type="term" value="P:FtsZ-dependent cytokinesis"/>
    <property type="evidence" value="ECO:0007669"/>
    <property type="project" value="UniProtKB-UniRule"/>
</dbReference>
<dbReference type="HAMAP" id="MF_00906">
    <property type="entry name" value="ZapC"/>
    <property type="match status" value="1"/>
</dbReference>
<dbReference type="InterPro" id="IPR009809">
    <property type="entry name" value="ZapC"/>
</dbReference>
<dbReference type="InterPro" id="IPR048372">
    <property type="entry name" value="ZapC_C"/>
</dbReference>
<dbReference type="InterPro" id="IPR048373">
    <property type="entry name" value="ZapC_N"/>
</dbReference>
<dbReference type="Pfam" id="PF07126">
    <property type="entry name" value="ZapC_C"/>
    <property type="match status" value="1"/>
</dbReference>
<dbReference type="Pfam" id="PF21083">
    <property type="entry name" value="ZapC_N"/>
    <property type="match status" value="1"/>
</dbReference>
<dbReference type="PIRSF" id="PIRSF010252">
    <property type="entry name" value="ZapC"/>
    <property type="match status" value="1"/>
</dbReference>
<organism>
    <name type="scientific">Pseudoalteromonas atlantica (strain T6c / ATCC BAA-1087)</name>
    <dbReference type="NCBI Taxonomy" id="3042615"/>
    <lineage>
        <taxon>Bacteria</taxon>
        <taxon>Pseudomonadati</taxon>
        <taxon>Pseudomonadota</taxon>
        <taxon>Gammaproteobacteria</taxon>
        <taxon>Alteromonadales</taxon>
        <taxon>Alteromonadaceae</taxon>
        <taxon>Paraglaciecola</taxon>
    </lineage>
</organism>
<comment type="function">
    <text evidence="1">Contributes to the efficiency of the cell division process by stabilizing the polymeric form of the cell division protein FtsZ. Acts by promoting interactions between FtsZ protofilaments and suppressing the GTPase activity of FtsZ.</text>
</comment>
<comment type="subunit">
    <text evidence="1">Interacts directly with FtsZ.</text>
</comment>
<comment type="subcellular location">
    <subcellularLocation>
        <location evidence="1">Cytoplasm</location>
    </subcellularLocation>
</comment>
<comment type="similarity">
    <text evidence="1">Belongs to the ZapC family.</text>
</comment>
<evidence type="ECO:0000255" key="1">
    <source>
        <dbReference type="HAMAP-Rule" id="MF_00906"/>
    </source>
</evidence>
<gene>
    <name evidence="1" type="primary">zapC</name>
    <name type="ordered locus">Patl_2004</name>
</gene>
<protein>
    <recommendedName>
        <fullName evidence="1">Cell division protein ZapC</fullName>
    </recommendedName>
</protein>
<reference key="1">
    <citation type="submission" date="2006-06" db="EMBL/GenBank/DDBJ databases">
        <title>Complete sequence of Pseudoalteromonas atlantica T6c.</title>
        <authorList>
            <consortium name="US DOE Joint Genome Institute"/>
            <person name="Copeland A."/>
            <person name="Lucas S."/>
            <person name="Lapidus A."/>
            <person name="Barry K."/>
            <person name="Detter J.C."/>
            <person name="Glavina del Rio T."/>
            <person name="Hammon N."/>
            <person name="Israni S."/>
            <person name="Dalin E."/>
            <person name="Tice H."/>
            <person name="Pitluck S."/>
            <person name="Saunders E."/>
            <person name="Brettin T."/>
            <person name="Bruce D."/>
            <person name="Han C."/>
            <person name="Tapia R."/>
            <person name="Gilna P."/>
            <person name="Schmutz J."/>
            <person name="Larimer F."/>
            <person name="Land M."/>
            <person name="Hauser L."/>
            <person name="Kyrpides N."/>
            <person name="Kim E."/>
            <person name="Karls A.C."/>
            <person name="Bartlett D."/>
            <person name="Higgins B.P."/>
            <person name="Richardson P."/>
        </authorList>
    </citation>
    <scope>NUCLEOTIDE SEQUENCE [LARGE SCALE GENOMIC DNA]</scope>
    <source>
        <strain>T6c / ATCC BAA-1087</strain>
    </source>
</reference>
<name>ZAPC_PSEA6</name>
<accession>Q15UB6</accession>
<sequence>MLLPNTNWFWYTHENELRLDLGDTLTFVAPFALKNLVNLPSDKQLFSLEDTEHYVALAESLDNSGLELSDGELVQILLNATAALKFHKPIGMKSWLYKTQSTSGVHYQLALLEPTDTAYPELGQVIVIEQDGACATCMLISNEFAVNSSKKFSKFEMIKVMNDRLIPCLVDIPVYKRA</sequence>
<keyword id="KW-0131">Cell cycle</keyword>
<keyword id="KW-0132">Cell division</keyword>
<keyword id="KW-0963">Cytoplasm</keyword>
<keyword id="KW-0717">Septation</keyword>